<keyword id="KW-0325">Glycoprotein</keyword>
<keyword id="KW-1043">Host membrane</keyword>
<keyword id="KW-0426">Late protein</keyword>
<keyword id="KW-0472">Membrane</keyword>
<keyword id="KW-0812">Transmembrane</keyword>
<keyword id="KW-1133">Transmembrane helix</keyword>
<keyword id="KW-0946">Virion</keyword>
<dbReference type="EMBL" id="AY261360">
    <property type="status" value="NOT_ANNOTATED_CDS"/>
    <property type="molecule type" value="Genomic_DNA"/>
</dbReference>
<dbReference type="SMR" id="P0CA70"/>
<dbReference type="Proteomes" id="UP000000861">
    <property type="component" value="Segment"/>
</dbReference>
<dbReference type="GO" id="GO:0033644">
    <property type="term" value="C:host cell membrane"/>
    <property type="evidence" value="ECO:0007669"/>
    <property type="project" value="UniProtKB-SubCell"/>
</dbReference>
<dbReference type="GO" id="GO:0016020">
    <property type="term" value="C:membrane"/>
    <property type="evidence" value="ECO:0007669"/>
    <property type="project" value="UniProtKB-KW"/>
</dbReference>
<dbReference type="GO" id="GO:0044423">
    <property type="term" value="C:virion component"/>
    <property type="evidence" value="ECO:0007669"/>
    <property type="project" value="UniProtKB-KW"/>
</dbReference>
<feature type="chain" id="PRO_0000373549" description="Transmembrane protein B169L">
    <location>
        <begin position="1"/>
        <end position="164"/>
    </location>
</feature>
<feature type="transmembrane region" description="Helical" evidence="2">
    <location>
        <begin position="28"/>
        <end position="48"/>
    </location>
</feature>
<feature type="transmembrane region" description="Helical" evidence="2">
    <location>
        <begin position="60"/>
        <end position="80"/>
    </location>
</feature>
<feature type="region of interest" description="Disordered" evidence="3">
    <location>
        <begin position="114"/>
        <end position="142"/>
    </location>
</feature>
<feature type="glycosylation site" description="N-linked (GlcNAc...) asparagine; by host" evidence="2">
    <location>
        <position position="88"/>
    </location>
</feature>
<accession>P0CA70</accession>
<organismHost>
    <name type="scientific">Ornithodoros</name>
    <name type="common">relapsing fever ticks</name>
    <dbReference type="NCBI Taxonomy" id="6937"/>
</organismHost>
<organismHost>
    <name type="scientific">Phacochoerus aethiopicus</name>
    <name type="common">Warthog</name>
    <dbReference type="NCBI Taxonomy" id="85517"/>
</organismHost>
<organismHost>
    <name type="scientific">Phacochoerus africanus</name>
    <name type="common">Warthog</name>
    <dbReference type="NCBI Taxonomy" id="41426"/>
</organismHost>
<organismHost>
    <name type="scientific">Potamochoerus larvatus</name>
    <name type="common">Bushpig</name>
    <dbReference type="NCBI Taxonomy" id="273792"/>
</organismHost>
<organismHost>
    <name type="scientific">Sus scrofa</name>
    <name type="common">Pig</name>
    <dbReference type="NCBI Taxonomy" id="9823"/>
</organismHost>
<evidence type="ECO:0000250" key="1">
    <source>
        <dbReference type="UniProtKB" id="Q65166"/>
    </source>
</evidence>
<evidence type="ECO:0000255" key="2"/>
<evidence type="ECO:0000256" key="3">
    <source>
        <dbReference type="SAM" id="MobiDB-lite"/>
    </source>
</evidence>
<evidence type="ECO:0000305" key="4"/>
<comment type="subcellular location">
    <subcellularLocation>
        <location evidence="4">Host membrane</location>
        <topology evidence="4">Multi-pass membrane protein</topology>
    </subcellularLocation>
    <subcellularLocation>
        <location evidence="1">Virion</location>
    </subcellularLocation>
</comment>
<comment type="similarity">
    <text evidence="4">Belongs to the asfivirus B169L family.</text>
</comment>
<sequence length="164" mass="18380">MNVDFIAGINNLGEKIYTCEPFKTSFQNPFIVALIITAVVLVVFFAICNPPVDKKRKTKTAIYIYICIVALLFLHYYVLNHQLNDIYNKSNMDVIVSSIHDKYKGGDEIIPPVSPPSVPDELEEDRPKMIPAGSKPADFKPAEPAVSKPLIPLQEVIMPSQYNN</sequence>
<protein>
    <recommendedName>
        <fullName>Transmembrane protein B169L</fullName>
        <shortName>pB169L</shortName>
    </recommendedName>
</protein>
<gene>
    <name type="ordered locus">Ken-088</name>
</gene>
<proteinExistence type="inferred from homology"/>
<organism>
    <name type="scientific">African swine fever virus (isolate Pig/Kenya/KEN-50/1950)</name>
    <name type="common">ASFV</name>
    <dbReference type="NCBI Taxonomy" id="561445"/>
    <lineage>
        <taxon>Viruses</taxon>
        <taxon>Varidnaviria</taxon>
        <taxon>Bamfordvirae</taxon>
        <taxon>Nucleocytoviricota</taxon>
        <taxon>Pokkesviricetes</taxon>
        <taxon>Asfuvirales</taxon>
        <taxon>Asfarviridae</taxon>
        <taxon>Asfivirus</taxon>
        <taxon>African swine fever virus</taxon>
    </lineage>
</organism>
<reference key="1">
    <citation type="submission" date="2003-03" db="EMBL/GenBank/DDBJ databases">
        <title>African swine fever virus genomes.</title>
        <authorList>
            <person name="Kutish G.F."/>
            <person name="Rock D.L."/>
        </authorList>
    </citation>
    <scope>NUCLEOTIDE SEQUENCE [LARGE SCALE GENOMIC DNA]</scope>
</reference>
<name>VF169_ASFK5</name>